<accession>Q9ZNU6</accession>
<evidence type="ECO:0000250" key="1"/>
<evidence type="ECO:0000255" key="2"/>
<evidence type="ECO:0000269" key="3">
    <source>
    </source>
</evidence>
<evidence type="ECO:0000269" key="4">
    <source>
    </source>
</evidence>
<evidence type="ECO:0000305" key="5"/>
<name>DET1_SOLLC</name>
<keyword id="KW-0539">Nucleus</keyword>
<keyword id="KW-0607">Phytochrome signaling pathway</keyword>
<keyword id="KW-1185">Reference proteome</keyword>
<proteinExistence type="evidence at protein level"/>
<gene>
    <name type="primary">DET1</name>
    <name type="synonym">dg</name>
    <name type="synonym">hp2</name>
</gene>
<protein>
    <recommendedName>
        <fullName>Light-mediated development protein DET1</fullName>
    </recommendedName>
    <alternativeName>
        <fullName>Deetiolated1 homolog</fullName>
    </alternativeName>
    <alternativeName>
        <fullName>High pigmentation protein 2</fullName>
    </alternativeName>
    <alternativeName>
        <fullName>Protein dark green</fullName>
    </alternativeName>
    <alternativeName>
        <fullName>tDET1</fullName>
    </alternativeName>
</protein>
<comment type="function">
    <text>Component of light signal transduction machinery. Involved in fruit pigmentation and fruit nutritional quality. Acts as a negative regulator of fruit pigmentation. Probably acts by participating in the CDD complex, a complex probably required to regulate the activity of ubiquitin conjugating enzymes. Repression of photomorphogenesis is probably mediated by ubiquitination and subsequent degradation of photomorphogenesis-promoting factors such as HY5.</text>
</comment>
<comment type="subunit">
    <text evidence="1">Probable component of the CDD complex, which probably also contains DDB1.</text>
</comment>
<comment type="interaction">
    <interactant intactId="EBI-2029363">
        <id>Q9ZNU6</id>
    </interactant>
    <interactant intactId="EBI-541750">
        <id>Q8LGH4</id>
        <label>CUL4</label>
    </interactant>
    <organismsDiffer>true</organismsDiffer>
    <experiments>2</experiments>
</comment>
<comment type="subcellular location">
    <subcellularLocation>
        <location evidence="1">Nucleus</location>
    </subcellularLocation>
</comment>
<comment type="similarity">
    <text evidence="5">Belongs to the DET1 family.</text>
</comment>
<sequence>MFKTNNVTARLFERQICTPAPGTSIHRARRFYENVVPSYTIYDVECPDHSFRKFTDDGLYFVSFSRNHQDLVVYRPTWLTFSCKEEDCDTHDLPLKARKFESFFTQLYSVTLASSGELICKDFFLYMESNQFGLFATSTAQIHDAPPTGGAIQGVPSVEKITFHLLRLVDGAILDERVFHNDYVNLAHSIGAFLYDDLLAIVSLRYQRIHILQIRDSGDLVDVRAIGEFCREDDELFLNSNSQVLVNHVGNGFHHSLPQSETSFLSGIKQRLLSYIFRGIWNEADQTMRVQCLKKKFYFHFQDYIDLIIWKVQFLDRHHLLIKFGSVDGGVSRNADIHPSFFAVYNMETTEIVAFYQNSADELYFLFELFSDHFHVSSKSSLHMNFMSSHSNNIHALEQLRCTKNKATNFSQFVKKMMASLPCSCQSQSPSPYFDQSLFRFDEKLISAIDRHRQSTDHPIKFISRRQPNILKFKMKPGPEAGSTDGRTKKICSFLFHPILPLALSVQQTLFLQASVVNIHFRR</sequence>
<feature type="chain" id="PRO_0000129029" description="Light-mediated development protein DET1">
    <location>
        <begin position="1"/>
        <end position="523"/>
    </location>
</feature>
<feature type="short sequence motif" description="Nuclear localization signal" evidence="2">
    <location>
        <begin position="401"/>
        <end position="416"/>
    </location>
</feature>
<feature type="short sequence motif" description="Nuclear localization signal" evidence="2">
    <location>
        <begin position="472"/>
        <end position="490"/>
    </location>
</feature>
<feature type="mutagenesis site" description="In dg; induces a much darker mature-green due to higher total chlorophyll content." evidence="3">
    <original>N</original>
    <variation>I</variation>
    <location>
        <position position="34"/>
    </location>
</feature>
<feature type="mutagenesis site" description="In hp-2; induces higher fruit and doliage pigmentation due to higher levels of carotenoids, primarily lycopene, and flavonoids in the mature ripe-red fruit." evidence="4">
    <location>
        <begin position="478"/>
        <end position="480"/>
    </location>
</feature>
<feature type="mutagenesis site" description="In hp-2j; induces higher fruit and doliage pigmentation due to higher levels of carotenoids, primarily lycopene, and flavonoids in the mature ripe-red fruit." evidence="4">
    <original>P</original>
    <variation>S</variation>
    <location>
        <position position="498"/>
    </location>
</feature>
<reference key="1">
    <citation type="journal article" date="1999" name="Plant Cell">
        <title>Phenotype of the tomato high pigment-2 mutant is caused by a mutation in the tomato homolog of DEETIOLATED1.</title>
        <authorList>
            <person name="Mustilli A.C."/>
            <person name="Fenzi F."/>
            <person name="Ciliento R."/>
            <person name="Alfano F."/>
            <person name="Bowler C."/>
        </authorList>
    </citation>
    <scope>NUCLEOTIDE SEQUENCE [GENOMIC DNA / MRNA]</scope>
    <scope>MUTAGENESIS OF 478-GLY--GLU-480 AND PRO-498</scope>
</reference>
<reference key="2">
    <citation type="journal article" date="2003" name="Theor. Appl. Genet.">
        <title>The tomato dark green mutation is a novel allele of the tomato homolog of the DEETIOLATED1 gene.</title>
        <authorList>
            <person name="Levin I."/>
            <person name="Frankel P."/>
            <person name="Gilboa N."/>
            <person name="Tanny S."/>
            <person name="Lalazar A."/>
        </authorList>
    </citation>
    <scope>MUTAGENESIS OF ASN-34</scope>
</reference>
<organism>
    <name type="scientific">Solanum lycopersicum</name>
    <name type="common">Tomato</name>
    <name type="synonym">Lycopersicon esculentum</name>
    <dbReference type="NCBI Taxonomy" id="4081"/>
    <lineage>
        <taxon>Eukaryota</taxon>
        <taxon>Viridiplantae</taxon>
        <taxon>Streptophyta</taxon>
        <taxon>Embryophyta</taxon>
        <taxon>Tracheophyta</taxon>
        <taxon>Spermatophyta</taxon>
        <taxon>Magnoliopsida</taxon>
        <taxon>eudicotyledons</taxon>
        <taxon>Gunneridae</taxon>
        <taxon>Pentapetalae</taxon>
        <taxon>asterids</taxon>
        <taxon>lamiids</taxon>
        <taxon>Solanales</taxon>
        <taxon>Solanaceae</taxon>
        <taxon>Solanoideae</taxon>
        <taxon>Solaneae</taxon>
        <taxon>Solanum</taxon>
        <taxon>Solanum subgen. Lycopersicon</taxon>
    </lineage>
</organism>
<dbReference type="EMBL" id="AJ224356">
    <property type="protein sequence ID" value="CAA11914.1"/>
    <property type="molecule type" value="Genomic_DNA"/>
</dbReference>
<dbReference type="EMBL" id="AJ224357">
    <property type="protein sequence ID" value="CAA11914.1"/>
    <property type="status" value="JOINED"/>
    <property type="molecule type" value="Genomic_DNA"/>
</dbReference>
<dbReference type="EMBL" id="AJ222798">
    <property type="protein sequence ID" value="CAA10993.1"/>
    <property type="molecule type" value="mRNA"/>
</dbReference>
<dbReference type="RefSeq" id="NP_001234148.1">
    <property type="nucleotide sequence ID" value="NM_001247219.2"/>
</dbReference>
<dbReference type="FunCoup" id="Q9ZNU6">
    <property type="interactions" value="2226"/>
</dbReference>
<dbReference type="IntAct" id="Q9ZNU6">
    <property type="interactions" value="2"/>
</dbReference>
<dbReference type="STRING" id="4081.Q9ZNU6"/>
<dbReference type="PaxDb" id="4081-Solyc01g056340.2.1"/>
<dbReference type="EnsemblPlants" id="Solyc01g056340.3.1">
    <property type="protein sequence ID" value="Solyc01g056340.3.1"/>
    <property type="gene ID" value="Solyc01g056340.3"/>
</dbReference>
<dbReference type="GeneID" id="778329"/>
<dbReference type="Gramene" id="Solyc01g056340.3.1">
    <property type="protein sequence ID" value="Solyc01g056340.3.1"/>
    <property type="gene ID" value="Solyc01g056340.3"/>
</dbReference>
<dbReference type="KEGG" id="sly:778329"/>
<dbReference type="eggNOG" id="KOG2558">
    <property type="taxonomic scope" value="Eukaryota"/>
</dbReference>
<dbReference type="HOGENOM" id="CLU_036725_2_0_1"/>
<dbReference type="InParanoid" id="Q9ZNU6"/>
<dbReference type="OMA" id="ITPCLTI"/>
<dbReference type="OrthoDB" id="18339at2759"/>
<dbReference type="PhylomeDB" id="Q9ZNU6"/>
<dbReference type="Proteomes" id="UP000004994">
    <property type="component" value="Chromosome 1"/>
</dbReference>
<dbReference type="ExpressionAtlas" id="Q9ZNU6">
    <property type="expression patterns" value="baseline and differential"/>
</dbReference>
<dbReference type="GO" id="GO:0031461">
    <property type="term" value="C:cullin-RING ubiquitin ligase complex"/>
    <property type="evidence" value="ECO:0000318"/>
    <property type="project" value="GO_Central"/>
</dbReference>
<dbReference type="GO" id="GO:0005634">
    <property type="term" value="C:nucleus"/>
    <property type="evidence" value="ECO:0000318"/>
    <property type="project" value="GO_Central"/>
</dbReference>
<dbReference type="GO" id="GO:0031625">
    <property type="term" value="F:ubiquitin protein ligase binding"/>
    <property type="evidence" value="ECO:0000318"/>
    <property type="project" value="GO_Central"/>
</dbReference>
<dbReference type="GO" id="GO:1990756">
    <property type="term" value="F:ubiquitin-like ligase-substrate adaptor activity"/>
    <property type="evidence" value="ECO:0000318"/>
    <property type="project" value="GO_Central"/>
</dbReference>
<dbReference type="GO" id="GO:0005975">
    <property type="term" value="P:carbohydrate metabolic process"/>
    <property type="evidence" value="ECO:0007669"/>
    <property type="project" value="InterPro"/>
</dbReference>
<dbReference type="GO" id="GO:0032436">
    <property type="term" value="P:positive regulation of proteasomal ubiquitin-dependent protein catabolic process"/>
    <property type="evidence" value="ECO:0000318"/>
    <property type="project" value="GO_Central"/>
</dbReference>
<dbReference type="GO" id="GO:0016567">
    <property type="term" value="P:protein ubiquitination"/>
    <property type="evidence" value="ECO:0000318"/>
    <property type="project" value="GO_Central"/>
</dbReference>
<dbReference type="GO" id="GO:0009585">
    <property type="term" value="P:red, far-red light phototransduction"/>
    <property type="evidence" value="ECO:0007669"/>
    <property type="project" value="UniProtKB-KW"/>
</dbReference>
<dbReference type="InterPro" id="IPR008928">
    <property type="entry name" value="6-hairpin_glycosidase_sf"/>
</dbReference>
<dbReference type="InterPro" id="IPR019138">
    <property type="entry name" value="De-etiolated_protein_1_Det1"/>
</dbReference>
<dbReference type="PANTHER" id="PTHR13374:SF3">
    <property type="entry name" value="DET1 HOMOLOG"/>
    <property type="match status" value="1"/>
</dbReference>
<dbReference type="PANTHER" id="PTHR13374">
    <property type="entry name" value="DET1 HOMOLOG DE-ETIOLATED-1 HOMOLOG"/>
    <property type="match status" value="1"/>
</dbReference>
<dbReference type="Pfam" id="PF09737">
    <property type="entry name" value="Det1"/>
    <property type="match status" value="1"/>
</dbReference>
<dbReference type="SUPFAM" id="SSF48208">
    <property type="entry name" value="Six-hairpin glycosidases"/>
    <property type="match status" value="1"/>
</dbReference>